<accession>P39128</accession>
<accession>O31531</accession>
<sequence length="318" mass="36572">METVPKKRDAPVLTAGKGISWMAALKRDKWLYLLLIPGLLYFLIFKYLPMWGVLIAFKDYSPYLGFWKSEWVGFDYFKDFFMNPDFFRLLRNTLMLASLDLLFAFPAPLILALLLNEVRKAVYKRCIQTFIYVPHFVSWTIVVSITFVFFTVDTGVINKLIMSLTGEQISFLSDADWFRPMIVMQSIWKETGWGTILFLAALATVDQEQYEAAIMDGAGRFRRMWHITLPAIRSTIIVLLILRIGSFLNLGFEQVYLMTNSLNRSVADIFDTYVYMMGITQGAYSYSTAVGLFKSVVGIILIFGANYIAKKFDQEGLF</sequence>
<comment type="subcellular location">
    <subcellularLocation>
        <location>Cell membrane</location>
        <topology>Multi-pass membrane protein</topology>
    </subcellularLocation>
</comment>
<comment type="similarity">
    <text evidence="2">Belongs to the binding-protein-dependent transport system permease family. MalFG subfamily.</text>
</comment>
<keyword id="KW-1003">Cell membrane</keyword>
<keyword id="KW-0472">Membrane</keyword>
<keyword id="KW-1185">Reference proteome</keyword>
<keyword id="KW-0812">Transmembrane</keyword>
<keyword id="KW-1133">Transmembrane helix</keyword>
<keyword id="KW-0813">Transport</keyword>
<dbReference type="EMBL" id="L19163">
    <property type="protein sequence ID" value="AAA22575.1"/>
    <property type="molecule type" value="Genomic_DNA"/>
</dbReference>
<dbReference type="EMBL" id="AL009126">
    <property type="protein sequence ID" value="CAB12530.1"/>
    <property type="molecule type" value="Genomic_DNA"/>
</dbReference>
<dbReference type="PIR" id="A69653">
    <property type="entry name" value="A69653"/>
</dbReference>
<dbReference type="RefSeq" id="NP_388592.1">
    <property type="nucleotide sequence ID" value="NC_000964.3"/>
</dbReference>
<dbReference type="RefSeq" id="WP_003244086.1">
    <property type="nucleotide sequence ID" value="NZ_OZ025638.1"/>
</dbReference>
<dbReference type="SMR" id="P39128"/>
<dbReference type="FunCoup" id="P39128">
    <property type="interactions" value="206"/>
</dbReference>
<dbReference type="STRING" id="224308.BSU07110"/>
<dbReference type="PaxDb" id="224308-BSU07110"/>
<dbReference type="EnsemblBacteria" id="CAB12530">
    <property type="protein sequence ID" value="CAB12530"/>
    <property type="gene ID" value="BSU_07110"/>
</dbReference>
<dbReference type="GeneID" id="936088"/>
<dbReference type="KEGG" id="bsu:BSU07110"/>
<dbReference type="PATRIC" id="fig|224308.179.peg.771"/>
<dbReference type="eggNOG" id="COG4209">
    <property type="taxonomic scope" value="Bacteria"/>
</dbReference>
<dbReference type="InParanoid" id="P39128"/>
<dbReference type="OrthoDB" id="9785836at2"/>
<dbReference type="PhylomeDB" id="P39128"/>
<dbReference type="Proteomes" id="UP000001570">
    <property type="component" value="Chromosome"/>
</dbReference>
<dbReference type="GO" id="GO:0005886">
    <property type="term" value="C:plasma membrane"/>
    <property type="evidence" value="ECO:0007669"/>
    <property type="project" value="UniProtKB-SubCell"/>
</dbReference>
<dbReference type="GO" id="GO:0055085">
    <property type="term" value="P:transmembrane transport"/>
    <property type="evidence" value="ECO:0007669"/>
    <property type="project" value="InterPro"/>
</dbReference>
<dbReference type="CDD" id="cd06261">
    <property type="entry name" value="TM_PBP2"/>
    <property type="match status" value="1"/>
</dbReference>
<dbReference type="Gene3D" id="1.10.3720.10">
    <property type="entry name" value="MetI-like"/>
    <property type="match status" value="1"/>
</dbReference>
<dbReference type="InterPro" id="IPR000515">
    <property type="entry name" value="MetI-like"/>
</dbReference>
<dbReference type="InterPro" id="IPR035906">
    <property type="entry name" value="MetI-like_sf"/>
</dbReference>
<dbReference type="PANTHER" id="PTHR43496:SF1">
    <property type="entry name" value="POLYGALACTURONAN_RHAMNOGALACTURONAN TRANSPORT SYSTEM PERMEASE PROTEIN YTEP"/>
    <property type="match status" value="1"/>
</dbReference>
<dbReference type="PANTHER" id="PTHR43496">
    <property type="entry name" value="PROTEIN LPLB"/>
    <property type="match status" value="1"/>
</dbReference>
<dbReference type="Pfam" id="PF00528">
    <property type="entry name" value="BPD_transp_1"/>
    <property type="match status" value="1"/>
</dbReference>
<dbReference type="SUPFAM" id="SSF161098">
    <property type="entry name" value="MetI-like"/>
    <property type="match status" value="1"/>
</dbReference>
<dbReference type="PROSITE" id="PS50928">
    <property type="entry name" value="ABC_TM1"/>
    <property type="match status" value="1"/>
</dbReference>
<feature type="chain" id="PRO_0000060066" description="Protein LplB">
    <location>
        <begin position="1"/>
        <end position="318"/>
    </location>
</feature>
<feature type="transmembrane region" description="Helical" evidence="1">
    <location>
        <begin position="35"/>
        <end position="55"/>
    </location>
</feature>
<feature type="transmembrane region" description="Helical" evidence="1">
    <location>
        <begin position="94"/>
        <end position="114"/>
    </location>
</feature>
<feature type="transmembrane region" description="Helical" evidence="1">
    <location>
        <begin position="130"/>
        <end position="150"/>
    </location>
</feature>
<feature type="transmembrane region" description="Helical" evidence="1">
    <location>
        <begin position="182"/>
        <end position="202"/>
    </location>
</feature>
<feature type="transmembrane region" description="Helical" evidence="1">
    <location>
        <begin position="236"/>
        <end position="256"/>
    </location>
</feature>
<feature type="transmembrane region" description="Helical" evidence="1">
    <location>
        <begin position="289"/>
        <end position="309"/>
    </location>
</feature>
<feature type="domain" description="ABC transmembrane type-1" evidence="1">
    <location>
        <begin position="90"/>
        <end position="305"/>
    </location>
</feature>
<feature type="sequence conflict" description="In Ref. 1; AAA22575." evidence="2" ref="1">
    <original>G</original>
    <variation>R</variation>
    <location>
        <position position="251"/>
    </location>
</feature>
<protein>
    <recommendedName>
        <fullName>Protein LplB</fullName>
    </recommendedName>
</protein>
<organism>
    <name type="scientific">Bacillus subtilis (strain 168)</name>
    <dbReference type="NCBI Taxonomy" id="224308"/>
    <lineage>
        <taxon>Bacteria</taxon>
        <taxon>Bacillati</taxon>
        <taxon>Bacillota</taxon>
        <taxon>Bacilli</taxon>
        <taxon>Bacillales</taxon>
        <taxon>Bacillaceae</taxon>
        <taxon>Bacillus</taxon>
    </lineage>
</organism>
<evidence type="ECO:0000255" key="1">
    <source>
        <dbReference type="PROSITE-ProRule" id="PRU00441"/>
    </source>
</evidence>
<evidence type="ECO:0000305" key="2"/>
<proteinExistence type="inferred from homology"/>
<gene>
    <name type="primary">lplB</name>
    <name type="ordered locus">BSU07110</name>
</gene>
<reference key="1">
    <citation type="submission" date="1994-01" db="EMBL/GenBank/DDBJ databases">
        <title>The complete lpl cluster of Bacillus subtilis.</title>
        <authorList>
            <person name="Gomez A."/>
            <person name="Ramon D."/>
            <person name="Sanz P."/>
        </authorList>
    </citation>
    <scope>NUCLEOTIDE SEQUENCE [GENOMIC DNA]</scope>
    <source>
        <strain>168 / Marburg / ATCC 6051 / DSM 10 / JCM 1465 / NBRC 13719 / NCIMB 3610 / NRRL NRS-744 / VKM B-501</strain>
    </source>
</reference>
<reference key="2">
    <citation type="journal article" date="1997" name="Nature">
        <title>The complete genome sequence of the Gram-positive bacterium Bacillus subtilis.</title>
        <authorList>
            <person name="Kunst F."/>
            <person name="Ogasawara N."/>
            <person name="Moszer I."/>
            <person name="Albertini A.M."/>
            <person name="Alloni G."/>
            <person name="Azevedo V."/>
            <person name="Bertero M.G."/>
            <person name="Bessieres P."/>
            <person name="Bolotin A."/>
            <person name="Borchert S."/>
            <person name="Borriss R."/>
            <person name="Boursier L."/>
            <person name="Brans A."/>
            <person name="Braun M."/>
            <person name="Brignell S.C."/>
            <person name="Bron S."/>
            <person name="Brouillet S."/>
            <person name="Bruschi C.V."/>
            <person name="Caldwell B."/>
            <person name="Capuano V."/>
            <person name="Carter N.M."/>
            <person name="Choi S.-K."/>
            <person name="Codani J.-J."/>
            <person name="Connerton I.F."/>
            <person name="Cummings N.J."/>
            <person name="Daniel R.A."/>
            <person name="Denizot F."/>
            <person name="Devine K.M."/>
            <person name="Duesterhoeft A."/>
            <person name="Ehrlich S.D."/>
            <person name="Emmerson P.T."/>
            <person name="Entian K.-D."/>
            <person name="Errington J."/>
            <person name="Fabret C."/>
            <person name="Ferrari E."/>
            <person name="Foulger D."/>
            <person name="Fritz C."/>
            <person name="Fujita M."/>
            <person name="Fujita Y."/>
            <person name="Fuma S."/>
            <person name="Galizzi A."/>
            <person name="Galleron N."/>
            <person name="Ghim S.-Y."/>
            <person name="Glaser P."/>
            <person name="Goffeau A."/>
            <person name="Golightly E.J."/>
            <person name="Grandi G."/>
            <person name="Guiseppi G."/>
            <person name="Guy B.J."/>
            <person name="Haga K."/>
            <person name="Haiech J."/>
            <person name="Harwood C.R."/>
            <person name="Henaut A."/>
            <person name="Hilbert H."/>
            <person name="Holsappel S."/>
            <person name="Hosono S."/>
            <person name="Hullo M.-F."/>
            <person name="Itaya M."/>
            <person name="Jones L.-M."/>
            <person name="Joris B."/>
            <person name="Karamata D."/>
            <person name="Kasahara Y."/>
            <person name="Klaerr-Blanchard M."/>
            <person name="Klein C."/>
            <person name="Kobayashi Y."/>
            <person name="Koetter P."/>
            <person name="Koningstein G."/>
            <person name="Krogh S."/>
            <person name="Kumano M."/>
            <person name="Kurita K."/>
            <person name="Lapidus A."/>
            <person name="Lardinois S."/>
            <person name="Lauber J."/>
            <person name="Lazarevic V."/>
            <person name="Lee S.-M."/>
            <person name="Levine A."/>
            <person name="Liu H."/>
            <person name="Masuda S."/>
            <person name="Mauel C."/>
            <person name="Medigue C."/>
            <person name="Medina N."/>
            <person name="Mellado R.P."/>
            <person name="Mizuno M."/>
            <person name="Moestl D."/>
            <person name="Nakai S."/>
            <person name="Noback M."/>
            <person name="Noone D."/>
            <person name="O'Reilly M."/>
            <person name="Ogawa K."/>
            <person name="Ogiwara A."/>
            <person name="Oudega B."/>
            <person name="Park S.-H."/>
            <person name="Parro V."/>
            <person name="Pohl T.M."/>
            <person name="Portetelle D."/>
            <person name="Porwollik S."/>
            <person name="Prescott A.M."/>
            <person name="Presecan E."/>
            <person name="Pujic P."/>
            <person name="Purnelle B."/>
            <person name="Rapoport G."/>
            <person name="Rey M."/>
            <person name="Reynolds S."/>
            <person name="Rieger M."/>
            <person name="Rivolta C."/>
            <person name="Rocha E."/>
            <person name="Roche B."/>
            <person name="Rose M."/>
            <person name="Sadaie Y."/>
            <person name="Sato T."/>
            <person name="Scanlan E."/>
            <person name="Schleich S."/>
            <person name="Schroeter R."/>
            <person name="Scoffone F."/>
            <person name="Sekiguchi J."/>
            <person name="Sekowska A."/>
            <person name="Seror S.J."/>
            <person name="Serror P."/>
            <person name="Shin B.-S."/>
            <person name="Soldo B."/>
            <person name="Sorokin A."/>
            <person name="Tacconi E."/>
            <person name="Takagi T."/>
            <person name="Takahashi H."/>
            <person name="Takemaru K."/>
            <person name="Takeuchi M."/>
            <person name="Tamakoshi A."/>
            <person name="Tanaka T."/>
            <person name="Terpstra P."/>
            <person name="Tognoni A."/>
            <person name="Tosato V."/>
            <person name="Uchiyama S."/>
            <person name="Vandenbol M."/>
            <person name="Vannier F."/>
            <person name="Vassarotti A."/>
            <person name="Viari A."/>
            <person name="Wambutt R."/>
            <person name="Wedler E."/>
            <person name="Wedler H."/>
            <person name="Weitzenegger T."/>
            <person name="Winters P."/>
            <person name="Wipat A."/>
            <person name="Yamamoto H."/>
            <person name="Yamane K."/>
            <person name="Yasumoto K."/>
            <person name="Yata K."/>
            <person name="Yoshida K."/>
            <person name="Yoshikawa H.-F."/>
            <person name="Zumstein E."/>
            <person name="Yoshikawa H."/>
            <person name="Danchin A."/>
        </authorList>
    </citation>
    <scope>NUCLEOTIDE SEQUENCE [LARGE SCALE GENOMIC DNA]</scope>
    <source>
        <strain>168</strain>
    </source>
</reference>
<name>LPLB_BACSU</name>